<organism>
    <name type="scientific">Chlorobium chlorochromatii (strain CaD3)</name>
    <dbReference type="NCBI Taxonomy" id="340177"/>
    <lineage>
        <taxon>Bacteria</taxon>
        <taxon>Pseudomonadati</taxon>
        <taxon>Chlorobiota</taxon>
        <taxon>Chlorobiia</taxon>
        <taxon>Chlorobiales</taxon>
        <taxon>Chlorobiaceae</taxon>
        <taxon>Chlorobium/Pelodictyon group</taxon>
        <taxon>Chlorobium</taxon>
    </lineage>
</organism>
<gene>
    <name evidence="1" type="primary">rplS</name>
    <name type="ordered locus">Cag_0801</name>
</gene>
<feature type="chain" id="PRO_0000226839" description="Large ribosomal subunit protein bL19">
    <location>
        <begin position="1"/>
        <end position="120"/>
    </location>
</feature>
<name>RL19_CHLCH</name>
<dbReference type="EMBL" id="CP000108">
    <property type="protein sequence ID" value="ABB28067.1"/>
    <property type="molecule type" value="Genomic_DNA"/>
</dbReference>
<dbReference type="SMR" id="Q3ASF8"/>
<dbReference type="STRING" id="340177.Cag_0801"/>
<dbReference type="KEGG" id="cch:Cag_0801"/>
<dbReference type="eggNOG" id="COG0335">
    <property type="taxonomic scope" value="Bacteria"/>
</dbReference>
<dbReference type="HOGENOM" id="CLU_103507_2_1_10"/>
<dbReference type="OrthoDB" id="9803541at2"/>
<dbReference type="GO" id="GO:0022625">
    <property type="term" value="C:cytosolic large ribosomal subunit"/>
    <property type="evidence" value="ECO:0007669"/>
    <property type="project" value="TreeGrafter"/>
</dbReference>
<dbReference type="GO" id="GO:0003735">
    <property type="term" value="F:structural constituent of ribosome"/>
    <property type="evidence" value="ECO:0007669"/>
    <property type="project" value="InterPro"/>
</dbReference>
<dbReference type="GO" id="GO:0006412">
    <property type="term" value="P:translation"/>
    <property type="evidence" value="ECO:0007669"/>
    <property type="project" value="UniProtKB-UniRule"/>
</dbReference>
<dbReference type="Gene3D" id="2.30.30.790">
    <property type="match status" value="1"/>
</dbReference>
<dbReference type="HAMAP" id="MF_00402">
    <property type="entry name" value="Ribosomal_bL19"/>
    <property type="match status" value="1"/>
</dbReference>
<dbReference type="InterPro" id="IPR001857">
    <property type="entry name" value="Ribosomal_bL19"/>
</dbReference>
<dbReference type="InterPro" id="IPR018257">
    <property type="entry name" value="Ribosomal_bL19_CS"/>
</dbReference>
<dbReference type="InterPro" id="IPR038657">
    <property type="entry name" value="Ribosomal_bL19_sf"/>
</dbReference>
<dbReference type="InterPro" id="IPR008991">
    <property type="entry name" value="Translation_prot_SH3-like_sf"/>
</dbReference>
<dbReference type="NCBIfam" id="TIGR01024">
    <property type="entry name" value="rplS_bact"/>
    <property type="match status" value="1"/>
</dbReference>
<dbReference type="PANTHER" id="PTHR15680:SF9">
    <property type="entry name" value="LARGE RIBOSOMAL SUBUNIT PROTEIN BL19M"/>
    <property type="match status" value="1"/>
</dbReference>
<dbReference type="PANTHER" id="PTHR15680">
    <property type="entry name" value="RIBOSOMAL PROTEIN L19"/>
    <property type="match status" value="1"/>
</dbReference>
<dbReference type="Pfam" id="PF01245">
    <property type="entry name" value="Ribosomal_L19"/>
    <property type="match status" value="1"/>
</dbReference>
<dbReference type="PIRSF" id="PIRSF002191">
    <property type="entry name" value="Ribosomal_L19"/>
    <property type="match status" value="1"/>
</dbReference>
<dbReference type="PRINTS" id="PR00061">
    <property type="entry name" value="RIBOSOMALL19"/>
</dbReference>
<dbReference type="SUPFAM" id="SSF50104">
    <property type="entry name" value="Translation proteins SH3-like domain"/>
    <property type="match status" value="1"/>
</dbReference>
<dbReference type="PROSITE" id="PS01015">
    <property type="entry name" value="RIBOSOMAL_L19"/>
    <property type="match status" value="1"/>
</dbReference>
<proteinExistence type="inferred from homology"/>
<accession>Q3ASF8</accession>
<sequence length="120" mass="13415">MNQLIQLVESSLGANRFEQVRPGDTVKIQLRVIEGEKERLQAFEGVVISDRGEGGSKTITVRKISHGVGVERIIPVNSPNIESVTVLRHGRARRAKLFYLRKRTGKAALKVKERKTQVNA</sequence>
<evidence type="ECO:0000255" key="1">
    <source>
        <dbReference type="HAMAP-Rule" id="MF_00402"/>
    </source>
</evidence>
<evidence type="ECO:0000305" key="2"/>
<reference key="1">
    <citation type="submission" date="2005-08" db="EMBL/GenBank/DDBJ databases">
        <title>Complete sequence of Chlorobium chlorochromatii CaD3.</title>
        <authorList>
            <consortium name="US DOE Joint Genome Institute"/>
            <person name="Copeland A."/>
            <person name="Lucas S."/>
            <person name="Lapidus A."/>
            <person name="Barry K."/>
            <person name="Detter J.C."/>
            <person name="Glavina T."/>
            <person name="Hammon N."/>
            <person name="Israni S."/>
            <person name="Pitluck S."/>
            <person name="Bryant D."/>
            <person name="Schmutz J."/>
            <person name="Larimer F."/>
            <person name="Land M."/>
            <person name="Kyrpides N."/>
            <person name="Ivanova N."/>
            <person name="Richardson P."/>
        </authorList>
    </citation>
    <scope>NUCLEOTIDE SEQUENCE [LARGE SCALE GENOMIC DNA]</scope>
    <source>
        <strain>CaD3</strain>
    </source>
</reference>
<keyword id="KW-0687">Ribonucleoprotein</keyword>
<keyword id="KW-0689">Ribosomal protein</keyword>
<comment type="function">
    <text evidence="1">This protein is located at the 30S-50S ribosomal subunit interface and may play a role in the structure and function of the aminoacyl-tRNA binding site.</text>
</comment>
<comment type="similarity">
    <text evidence="1">Belongs to the bacterial ribosomal protein bL19 family.</text>
</comment>
<protein>
    <recommendedName>
        <fullName evidence="1">Large ribosomal subunit protein bL19</fullName>
    </recommendedName>
    <alternativeName>
        <fullName evidence="2">50S ribosomal protein L19</fullName>
    </alternativeName>
</protein>